<protein>
    <recommendedName>
        <fullName evidence="1">Nucleotide-binding protein YajQ</fullName>
    </recommendedName>
</protein>
<evidence type="ECO:0000255" key="1">
    <source>
        <dbReference type="HAMAP-Rule" id="MF_00632"/>
    </source>
</evidence>
<evidence type="ECO:0000305" key="2"/>
<dbReference type="EMBL" id="CP000243">
    <property type="protein sequence ID" value="ABE05950.1"/>
    <property type="status" value="ALT_INIT"/>
    <property type="molecule type" value="Genomic_DNA"/>
</dbReference>
<dbReference type="RefSeq" id="WP_001138904.1">
    <property type="nucleotide sequence ID" value="NZ_CP064825.1"/>
</dbReference>
<dbReference type="SMR" id="Q1RFB4"/>
<dbReference type="GeneID" id="93777034"/>
<dbReference type="KEGG" id="eci:UTI89_C0449"/>
<dbReference type="HOGENOM" id="CLU_099839_1_0_6"/>
<dbReference type="Proteomes" id="UP000001952">
    <property type="component" value="Chromosome"/>
</dbReference>
<dbReference type="GO" id="GO:0005829">
    <property type="term" value="C:cytosol"/>
    <property type="evidence" value="ECO:0007669"/>
    <property type="project" value="TreeGrafter"/>
</dbReference>
<dbReference type="GO" id="GO:0000166">
    <property type="term" value="F:nucleotide binding"/>
    <property type="evidence" value="ECO:0007669"/>
    <property type="project" value="TreeGrafter"/>
</dbReference>
<dbReference type="CDD" id="cd11740">
    <property type="entry name" value="YajQ_like"/>
    <property type="match status" value="1"/>
</dbReference>
<dbReference type="FunFam" id="3.30.70.860:FF:000001">
    <property type="entry name" value="UPF0234 protein YajQ"/>
    <property type="match status" value="1"/>
</dbReference>
<dbReference type="FunFam" id="3.30.70.990:FF:000001">
    <property type="entry name" value="UPF0234 protein YajQ"/>
    <property type="match status" value="1"/>
</dbReference>
<dbReference type="Gene3D" id="3.30.70.860">
    <property type="match status" value="1"/>
</dbReference>
<dbReference type="Gene3D" id="3.30.70.990">
    <property type="entry name" value="YajQ-like, domain 2"/>
    <property type="match status" value="1"/>
</dbReference>
<dbReference type="HAMAP" id="MF_00632">
    <property type="entry name" value="YajQ"/>
    <property type="match status" value="1"/>
</dbReference>
<dbReference type="InterPro" id="IPR007551">
    <property type="entry name" value="DUF520"/>
</dbReference>
<dbReference type="InterPro" id="IPR035571">
    <property type="entry name" value="UPF0234-like_C"/>
</dbReference>
<dbReference type="InterPro" id="IPR035570">
    <property type="entry name" value="UPF0234_N"/>
</dbReference>
<dbReference type="InterPro" id="IPR036183">
    <property type="entry name" value="YajQ-like_sf"/>
</dbReference>
<dbReference type="NCBIfam" id="NF003819">
    <property type="entry name" value="PRK05412.1"/>
    <property type="match status" value="1"/>
</dbReference>
<dbReference type="PANTHER" id="PTHR30476">
    <property type="entry name" value="UPF0234 PROTEIN YAJQ"/>
    <property type="match status" value="1"/>
</dbReference>
<dbReference type="PANTHER" id="PTHR30476:SF0">
    <property type="entry name" value="UPF0234 PROTEIN YAJQ"/>
    <property type="match status" value="1"/>
</dbReference>
<dbReference type="Pfam" id="PF04461">
    <property type="entry name" value="DUF520"/>
    <property type="match status" value="1"/>
</dbReference>
<dbReference type="SUPFAM" id="SSF89963">
    <property type="entry name" value="YajQ-like"/>
    <property type="match status" value="2"/>
</dbReference>
<keyword id="KW-0547">Nucleotide-binding</keyword>
<reference key="1">
    <citation type="journal article" date="2006" name="Proc. Natl. Acad. Sci. U.S.A.">
        <title>Identification of genes subject to positive selection in uropathogenic strains of Escherichia coli: a comparative genomics approach.</title>
        <authorList>
            <person name="Chen S.L."/>
            <person name="Hung C.-S."/>
            <person name="Xu J."/>
            <person name="Reigstad C.S."/>
            <person name="Magrini V."/>
            <person name="Sabo A."/>
            <person name="Blasiar D."/>
            <person name="Bieri T."/>
            <person name="Meyer R.R."/>
            <person name="Ozersky P."/>
            <person name="Armstrong J.R."/>
            <person name="Fulton R.S."/>
            <person name="Latreille J.P."/>
            <person name="Spieth J."/>
            <person name="Hooton T.M."/>
            <person name="Mardis E.R."/>
            <person name="Hultgren S.J."/>
            <person name="Gordon J.I."/>
        </authorList>
    </citation>
    <scope>NUCLEOTIDE SEQUENCE [LARGE SCALE GENOMIC DNA]</scope>
    <source>
        <strain>UTI89 / UPEC</strain>
    </source>
</reference>
<gene>
    <name evidence="1" type="primary">yajQ</name>
    <name type="ordered locus">UTI89_C0449</name>
</gene>
<proteinExistence type="inferred from homology"/>
<comment type="function">
    <text evidence="1">Nucleotide-binding protein.</text>
</comment>
<comment type="similarity">
    <text evidence="1">Belongs to the YajQ family.</text>
</comment>
<comment type="sequence caution" evidence="2">
    <conflict type="erroneous initiation">
        <sequence resource="EMBL-CDS" id="ABE05950"/>
    </conflict>
</comment>
<accession>Q1RFB4</accession>
<name>YAJQ_ECOUT</name>
<sequence length="163" mass="18344">MPSFDIVSEVDLQEARNAVDNASREVESRFDFRNVEASFELNDASKTIKVLSESDFQVNQLLDILRAKLLKRGIEGSSLDVPENIVHSGKTWFVEAKLKQGIESATQKKIVKMIKDSKLKVQAQIQGDEIRVTGKSRDDLQAVMAMVRGGDLGQPFQFKNFRD</sequence>
<feature type="chain" id="PRO_0000261935" description="Nucleotide-binding protein YajQ">
    <location>
        <begin position="1"/>
        <end position="163"/>
    </location>
</feature>
<organism>
    <name type="scientific">Escherichia coli (strain UTI89 / UPEC)</name>
    <dbReference type="NCBI Taxonomy" id="364106"/>
    <lineage>
        <taxon>Bacteria</taxon>
        <taxon>Pseudomonadati</taxon>
        <taxon>Pseudomonadota</taxon>
        <taxon>Gammaproteobacteria</taxon>
        <taxon>Enterobacterales</taxon>
        <taxon>Enterobacteriaceae</taxon>
        <taxon>Escherichia</taxon>
    </lineage>
</organism>